<organism>
    <name type="scientific">Volvox carteri</name>
    <name type="common">Green alga</name>
    <dbReference type="NCBI Taxonomy" id="3067"/>
    <lineage>
        <taxon>Eukaryota</taxon>
        <taxon>Viridiplantae</taxon>
        <taxon>Chlorophyta</taxon>
        <taxon>core chlorophytes</taxon>
        <taxon>Chlorophyceae</taxon>
        <taxon>CS clade</taxon>
        <taxon>Chlamydomonadales</taxon>
        <taxon>Volvocaceae</taxon>
        <taxon>Volvox</taxon>
    </lineage>
</organism>
<accession>P81132</accession>
<reference key="1">
    <citation type="journal article" date="1993" name="EMBO J.">
        <title>How a sex pheromone might act at a concentration below 10(-16) M.</title>
        <authorList>
            <person name="Sumper M."/>
            <person name="Berg E."/>
            <person name="Wenzl S."/>
            <person name="Godl K."/>
        </authorList>
    </citation>
    <scope>NUCLEOTIDE SEQUENCE [MRNA]</scope>
    <scope>PROTEIN SEQUENCE OF 1-13; 182-215 AND 413-441</scope>
</reference>
<protein>
    <recommendedName>
        <fullName>Perphorin-2</fullName>
    </recommendedName>
    <alternativeName>
        <fullName>Perphorin II</fullName>
    </alternativeName>
</protein>
<keyword id="KW-0903">Direct protein sequencing</keyword>
<keyword id="KW-0272">Extracellular matrix</keyword>
<keyword id="KW-0325">Glycoprotein</keyword>
<keyword id="KW-0964">Secreted</keyword>
<sequence length="484" mass="50861">AVTPGSIPNFPFRDCNTTNGAYRLAPVWRPSGSNTYCFKIQVSQDALSCTGACCSADLHKIEFNVCSSCLVAGASVDATVNGVRTRVGATLDKAPAGPVGSAVLRLTQLGLDTTTAQDAEVCLTLKTNRGGQGCTTLDQLCSSPGFPAGTCTAAMFDVACDCCPVSQAGQALPPPPPVIPPVLRPCDVCIAATIVPPANDVRPYRYDSATCAAIQQNIANAMNSLLGGANINVFSPFAPNASQCFDTQIITCGRFNGSDTDALANLTEAVQQQLSAFIGVASGGNVCNPKLEKYTVTVSTINNVADQCLDLSQSASCFLPGVPFPNCTCNTTQGVMPFTVSPTWYAQPANVRWGRNVTEYCFTVNTLQPSQVVPSTCYNANDALAKIEWYASDAFRSAVKGFTVYPAGGSNKTIADSWGATGTDTLKVNLNWNLLQANGGKVCVAIQNPFTMGDICKGALGQCYASIFNRDNSDYCCPIYRTGP</sequence>
<feature type="chain" id="PRO_0000058309" description="Perphorin-2">
    <location>
        <begin position="1" status="less than"/>
        <end position="484"/>
    </location>
</feature>
<feature type="glycosylation site" description="N-linked (GlcNAc...) asparagine" evidence="1">
    <location>
        <position position="16"/>
    </location>
</feature>
<feature type="glycosylation site" description="N-linked (GlcNAc...) asparagine" evidence="1">
    <location>
        <position position="240"/>
    </location>
</feature>
<feature type="glycosylation site" description="N-linked (GlcNAc...) asparagine" evidence="1">
    <location>
        <position position="256"/>
    </location>
</feature>
<feature type="glycosylation site" description="N-linked (GlcNAc...) asparagine" evidence="1">
    <location>
        <position position="265"/>
    </location>
</feature>
<feature type="glycosylation site" description="N-linked (GlcNAc...) asparagine" evidence="1">
    <location>
        <position position="326"/>
    </location>
</feature>
<feature type="glycosylation site" description="N-linked (GlcNAc...) asparagine" evidence="1">
    <location>
        <position position="330"/>
    </location>
</feature>
<feature type="glycosylation site" description="N-linked (GlcNAc...) asparagine" evidence="1">
    <location>
        <position position="356"/>
    </location>
</feature>
<feature type="glycosylation site" description="N-linked (GlcNAc...) asparagine" evidence="1">
    <location>
        <position position="411"/>
    </location>
</feature>
<feature type="non-terminal residue">
    <location>
        <position position="1"/>
    </location>
</feature>
<name>PER2_VOLCA</name>
<dbReference type="EMBL" id="X69802">
    <property type="protein sequence ID" value="CAB56809.1"/>
    <property type="molecule type" value="mRNA"/>
</dbReference>
<dbReference type="PIR" id="S36339">
    <property type="entry name" value="S36339"/>
</dbReference>
<dbReference type="GO" id="GO:0005576">
    <property type="term" value="C:extracellular region"/>
    <property type="evidence" value="ECO:0007669"/>
    <property type="project" value="UniProtKB-KW"/>
</dbReference>
<dbReference type="InterPro" id="IPR024616">
    <property type="entry name" value="Pherophorin"/>
</dbReference>
<dbReference type="Pfam" id="PF12499">
    <property type="entry name" value="DUF3707"/>
    <property type="match status" value="2"/>
</dbReference>
<proteinExistence type="evidence at protein level"/>
<comment type="function">
    <text>May be involved in conversion of asexual males and females to the sexual pathway.</text>
</comment>
<comment type="subcellular location">
    <subcellularLocation>
        <location>Secreted</location>
        <location>Extracellular space</location>
        <location>Extracellular matrix</location>
    </subcellularLocation>
</comment>
<comment type="induction">
    <text>By sexual inducer glycoprotein.</text>
</comment>
<evidence type="ECO:0000255" key="1"/>